<evidence type="ECO:0000255" key="1">
    <source>
        <dbReference type="HAMAP-Rule" id="MF_01367"/>
    </source>
</evidence>
<evidence type="ECO:0000305" key="2"/>
<dbReference type="EMBL" id="BX897700">
    <property type="protein sequence ID" value="CAF26296.1"/>
    <property type="molecule type" value="Genomic_DNA"/>
</dbReference>
<dbReference type="RefSeq" id="WP_004855715.1">
    <property type="nucleotide sequence ID" value="NC_005955.1"/>
</dbReference>
<dbReference type="SMR" id="Q6FZD2"/>
<dbReference type="GeneID" id="71061549"/>
<dbReference type="KEGG" id="bqu:BQ08130"/>
<dbReference type="eggNOG" id="COG0093">
    <property type="taxonomic scope" value="Bacteria"/>
</dbReference>
<dbReference type="HOGENOM" id="CLU_095071_2_1_5"/>
<dbReference type="OrthoDB" id="9806379at2"/>
<dbReference type="Proteomes" id="UP000000597">
    <property type="component" value="Chromosome"/>
</dbReference>
<dbReference type="GO" id="GO:0022625">
    <property type="term" value="C:cytosolic large ribosomal subunit"/>
    <property type="evidence" value="ECO:0007669"/>
    <property type="project" value="TreeGrafter"/>
</dbReference>
<dbReference type="GO" id="GO:0070180">
    <property type="term" value="F:large ribosomal subunit rRNA binding"/>
    <property type="evidence" value="ECO:0007669"/>
    <property type="project" value="TreeGrafter"/>
</dbReference>
<dbReference type="GO" id="GO:0003735">
    <property type="term" value="F:structural constituent of ribosome"/>
    <property type="evidence" value="ECO:0007669"/>
    <property type="project" value="InterPro"/>
</dbReference>
<dbReference type="GO" id="GO:0006412">
    <property type="term" value="P:translation"/>
    <property type="evidence" value="ECO:0007669"/>
    <property type="project" value="UniProtKB-UniRule"/>
</dbReference>
<dbReference type="CDD" id="cd00337">
    <property type="entry name" value="Ribosomal_uL14"/>
    <property type="match status" value="1"/>
</dbReference>
<dbReference type="FunFam" id="2.40.150.20:FF:000001">
    <property type="entry name" value="50S ribosomal protein L14"/>
    <property type="match status" value="1"/>
</dbReference>
<dbReference type="Gene3D" id="2.40.150.20">
    <property type="entry name" value="Ribosomal protein L14"/>
    <property type="match status" value="1"/>
</dbReference>
<dbReference type="HAMAP" id="MF_01367">
    <property type="entry name" value="Ribosomal_uL14"/>
    <property type="match status" value="1"/>
</dbReference>
<dbReference type="InterPro" id="IPR000218">
    <property type="entry name" value="Ribosomal_uL14"/>
</dbReference>
<dbReference type="InterPro" id="IPR005745">
    <property type="entry name" value="Ribosomal_uL14_bac-type"/>
</dbReference>
<dbReference type="InterPro" id="IPR019972">
    <property type="entry name" value="Ribosomal_uL14_CS"/>
</dbReference>
<dbReference type="InterPro" id="IPR036853">
    <property type="entry name" value="Ribosomal_uL14_sf"/>
</dbReference>
<dbReference type="NCBIfam" id="TIGR01067">
    <property type="entry name" value="rplN_bact"/>
    <property type="match status" value="1"/>
</dbReference>
<dbReference type="PANTHER" id="PTHR11761">
    <property type="entry name" value="50S/60S RIBOSOMAL PROTEIN L14/L23"/>
    <property type="match status" value="1"/>
</dbReference>
<dbReference type="PANTHER" id="PTHR11761:SF3">
    <property type="entry name" value="LARGE RIBOSOMAL SUBUNIT PROTEIN UL14M"/>
    <property type="match status" value="1"/>
</dbReference>
<dbReference type="Pfam" id="PF00238">
    <property type="entry name" value="Ribosomal_L14"/>
    <property type="match status" value="1"/>
</dbReference>
<dbReference type="SMART" id="SM01374">
    <property type="entry name" value="Ribosomal_L14"/>
    <property type="match status" value="1"/>
</dbReference>
<dbReference type="SUPFAM" id="SSF50193">
    <property type="entry name" value="Ribosomal protein L14"/>
    <property type="match status" value="1"/>
</dbReference>
<dbReference type="PROSITE" id="PS00049">
    <property type="entry name" value="RIBOSOMAL_L14"/>
    <property type="match status" value="1"/>
</dbReference>
<proteinExistence type="inferred from homology"/>
<gene>
    <name evidence="1" type="primary">rplN</name>
    <name type="ordered locus">BQ08130</name>
</gene>
<organism>
    <name type="scientific">Bartonella quintana (strain Toulouse)</name>
    <name type="common">Rochalimaea quintana</name>
    <dbReference type="NCBI Taxonomy" id="283165"/>
    <lineage>
        <taxon>Bacteria</taxon>
        <taxon>Pseudomonadati</taxon>
        <taxon>Pseudomonadota</taxon>
        <taxon>Alphaproteobacteria</taxon>
        <taxon>Hyphomicrobiales</taxon>
        <taxon>Bartonellaceae</taxon>
        <taxon>Bartonella</taxon>
    </lineage>
</organism>
<sequence>MIQMQTNLDVADNSGARRVMCIKVLGGSKRKYASVGDIIVVSVKDAIPRGRVKKGDVMKAVVVRTAKDIRRADGSVIRFDSNAAVLVDNKKEPIGTRIFGPVPRELRGRNHMKIISLAPEVL</sequence>
<reference key="1">
    <citation type="journal article" date="2004" name="Proc. Natl. Acad. Sci. U.S.A.">
        <title>The louse-borne human pathogen Bartonella quintana is a genomic derivative of the zoonotic agent Bartonella henselae.</title>
        <authorList>
            <person name="Alsmark U.C.M."/>
            <person name="Frank A.C."/>
            <person name="Karlberg E.O."/>
            <person name="Legault B.-A."/>
            <person name="Ardell D.H."/>
            <person name="Canbaeck B."/>
            <person name="Eriksson A.-S."/>
            <person name="Naeslund A.K."/>
            <person name="Handley S.A."/>
            <person name="Huvet M."/>
            <person name="La Scola B."/>
            <person name="Holmberg M."/>
            <person name="Andersson S.G.E."/>
        </authorList>
    </citation>
    <scope>NUCLEOTIDE SEQUENCE [LARGE SCALE GENOMIC DNA]</scope>
    <source>
        <strain>Toulouse</strain>
    </source>
</reference>
<accession>Q6FZD2</accession>
<protein>
    <recommendedName>
        <fullName evidence="1">Large ribosomal subunit protein uL14</fullName>
    </recommendedName>
    <alternativeName>
        <fullName evidence="2">50S ribosomal protein L14</fullName>
    </alternativeName>
</protein>
<comment type="function">
    <text evidence="1">Binds to 23S rRNA. Forms part of two intersubunit bridges in the 70S ribosome.</text>
</comment>
<comment type="subunit">
    <text evidence="1">Part of the 50S ribosomal subunit. Forms a cluster with proteins L3 and L19. In the 70S ribosome, L14 and L19 interact and together make contacts with the 16S rRNA in bridges B5 and B8.</text>
</comment>
<comment type="similarity">
    <text evidence="1">Belongs to the universal ribosomal protein uL14 family.</text>
</comment>
<feature type="chain" id="PRO_0000266449" description="Large ribosomal subunit protein uL14">
    <location>
        <begin position="1"/>
        <end position="122"/>
    </location>
</feature>
<name>RL14_BARQU</name>
<keyword id="KW-0687">Ribonucleoprotein</keyword>
<keyword id="KW-0689">Ribosomal protein</keyword>
<keyword id="KW-0694">RNA-binding</keyword>
<keyword id="KW-0699">rRNA-binding</keyword>